<organism>
    <name type="scientific">Streptococcus pyogenes serotype M1</name>
    <dbReference type="NCBI Taxonomy" id="301447"/>
    <lineage>
        <taxon>Bacteria</taxon>
        <taxon>Bacillati</taxon>
        <taxon>Bacillota</taxon>
        <taxon>Bacilli</taxon>
        <taxon>Lactobacillales</taxon>
        <taxon>Streptococcaceae</taxon>
        <taxon>Streptococcus</taxon>
    </lineage>
</organism>
<protein>
    <recommendedName>
        <fullName evidence="1">Probable tRNA sulfurtransferase</fullName>
        <ecNumber evidence="1">2.8.1.4</ecNumber>
    </recommendedName>
    <alternativeName>
        <fullName evidence="1">Sulfur carrier protein ThiS sulfurtransferase</fullName>
    </alternativeName>
    <alternativeName>
        <fullName evidence="1">Thiamine biosynthesis protein ThiI</fullName>
    </alternativeName>
    <alternativeName>
        <fullName evidence="1">tRNA 4-thiouridine synthase</fullName>
    </alternativeName>
</protein>
<reference key="1">
    <citation type="journal article" date="2001" name="Proc. Natl. Acad. Sci. U.S.A.">
        <title>Complete genome sequence of an M1 strain of Streptococcus pyogenes.</title>
        <authorList>
            <person name="Ferretti J.J."/>
            <person name="McShan W.M."/>
            <person name="Ajdic D.J."/>
            <person name="Savic D.J."/>
            <person name="Savic G."/>
            <person name="Lyon K."/>
            <person name="Primeaux C."/>
            <person name="Sezate S."/>
            <person name="Suvorov A.N."/>
            <person name="Kenton S."/>
            <person name="Lai H.S."/>
            <person name="Lin S.P."/>
            <person name="Qian Y."/>
            <person name="Jia H.G."/>
            <person name="Najar F.Z."/>
            <person name="Ren Q."/>
            <person name="Zhu H."/>
            <person name="Song L."/>
            <person name="White J."/>
            <person name="Yuan X."/>
            <person name="Clifton S.W."/>
            <person name="Roe B.A."/>
            <person name="McLaughlin R.E."/>
        </authorList>
    </citation>
    <scope>NUCLEOTIDE SEQUENCE [LARGE SCALE GENOMIC DNA]</scope>
    <source>
        <strain>ATCC 700294 / SF370 / Serotype M1</strain>
    </source>
</reference>
<reference key="2">
    <citation type="journal article" date="2005" name="J. Infect. Dis.">
        <title>Evolutionary origin and emergence of a highly successful clone of serotype M1 group A Streptococcus involved multiple horizontal gene transfer events.</title>
        <authorList>
            <person name="Sumby P."/>
            <person name="Porcella S.F."/>
            <person name="Madrigal A.G."/>
            <person name="Barbian K.D."/>
            <person name="Virtaneva K."/>
            <person name="Ricklefs S.M."/>
            <person name="Sturdevant D.E."/>
            <person name="Graham M.R."/>
            <person name="Vuopio-Varkila J."/>
            <person name="Hoe N.P."/>
            <person name="Musser J.M."/>
        </authorList>
    </citation>
    <scope>NUCLEOTIDE SEQUENCE [LARGE SCALE GENOMIC DNA]</scope>
    <source>
        <strain>ATCC BAA-947 / MGAS5005 / Serotype M1</strain>
    </source>
</reference>
<sequence length="404" mass="44731">MDYSEIMVRHGELSTKGKNRMRFINKLKNNIQDVLAPFPAITVRSDRDRTHVSLNGTDYQPIVEALKLVFGVQALSPVYKLEKSVPLLVTAVQDIMTSLYRDGLTFKIATKRSDHAFELDSRELNSLLGGAVFEVLPNIQAQMKHPDVTLKVEIRDEAAYISYEEIKGAGGLPVGTSGKGMLMLSGGIDSPVAGYLALKRGLDIEVVHFASPPYTSPGALAKAQDLTRRLTRFGGNIQFIEVPFTEIQEEIKNKAPEAYLMTLTRRFMMRITDAIREQRKGLVIVNGESLGQVASQTLESMQAINAVTSTPIIRPVVTMDKLEIIEMAQAIDTFDISIQPFEDCCTIFAPDRPKTNPKLGNAEKYEECFDIDGLVQRAVSGIVVTEITPEIVNDEVENLIDALL</sequence>
<evidence type="ECO:0000255" key="1">
    <source>
        <dbReference type="HAMAP-Rule" id="MF_00021"/>
    </source>
</evidence>
<evidence type="ECO:0000305" key="2"/>
<keyword id="KW-0067">ATP-binding</keyword>
<keyword id="KW-0963">Cytoplasm</keyword>
<keyword id="KW-0547">Nucleotide-binding</keyword>
<keyword id="KW-1185">Reference proteome</keyword>
<keyword id="KW-0694">RNA-binding</keyword>
<keyword id="KW-0784">Thiamine biosynthesis</keyword>
<keyword id="KW-0808">Transferase</keyword>
<keyword id="KW-0820">tRNA-binding</keyword>
<feature type="chain" id="PRO_0000154876" description="Probable tRNA sulfurtransferase">
    <location>
        <begin position="1"/>
        <end position="404"/>
    </location>
</feature>
<feature type="domain" description="THUMP" evidence="1">
    <location>
        <begin position="60"/>
        <end position="165"/>
    </location>
</feature>
<feature type="binding site" evidence="1">
    <location>
        <begin position="183"/>
        <end position="184"/>
    </location>
    <ligand>
        <name>ATP</name>
        <dbReference type="ChEBI" id="CHEBI:30616"/>
    </ligand>
</feature>
<feature type="binding site" evidence="1">
    <location>
        <begin position="208"/>
        <end position="209"/>
    </location>
    <ligand>
        <name>ATP</name>
        <dbReference type="ChEBI" id="CHEBI:30616"/>
    </ligand>
</feature>
<feature type="binding site" evidence="1">
    <location>
        <position position="265"/>
    </location>
    <ligand>
        <name>ATP</name>
        <dbReference type="ChEBI" id="CHEBI:30616"/>
    </ligand>
</feature>
<feature type="binding site" evidence="1">
    <location>
        <position position="287"/>
    </location>
    <ligand>
        <name>ATP</name>
        <dbReference type="ChEBI" id="CHEBI:30616"/>
    </ligand>
</feature>
<feature type="binding site" evidence="1">
    <location>
        <position position="296"/>
    </location>
    <ligand>
        <name>ATP</name>
        <dbReference type="ChEBI" id="CHEBI:30616"/>
    </ligand>
</feature>
<feature type="sequence conflict" description="In Ref. 2; AAZ51249." evidence="2" ref="2">
    <original>A</original>
    <variation>T</variation>
    <location>
        <position position="169"/>
    </location>
</feature>
<feature type="sequence conflict" description="In Ref. 2; AAZ51249." evidence="2" ref="2">
    <original>C</original>
    <variation>R</variation>
    <location>
        <position position="368"/>
    </location>
</feature>
<dbReference type="EC" id="2.8.1.4" evidence="1"/>
<dbReference type="EMBL" id="AE004092">
    <property type="protein sequence ID" value="AAK33753.1"/>
    <property type="molecule type" value="Genomic_DNA"/>
</dbReference>
<dbReference type="EMBL" id="CP000017">
    <property type="protein sequence ID" value="AAZ51249.1"/>
    <property type="molecule type" value="Genomic_DNA"/>
</dbReference>
<dbReference type="RefSeq" id="NP_269032.1">
    <property type="nucleotide sequence ID" value="NC_002737.2"/>
</dbReference>
<dbReference type="SMR" id="Q9A0D8"/>
<dbReference type="PaxDb" id="1314-HKU360_00642"/>
<dbReference type="KEGG" id="spy:SPy_0817"/>
<dbReference type="KEGG" id="spz:M5005_Spy0631"/>
<dbReference type="PATRIC" id="fig|160490.10.peg.700"/>
<dbReference type="HOGENOM" id="CLU_037952_4_0_9"/>
<dbReference type="OMA" id="SMPEFCG"/>
<dbReference type="UniPathway" id="UPA00060"/>
<dbReference type="Proteomes" id="UP000000750">
    <property type="component" value="Chromosome"/>
</dbReference>
<dbReference type="GO" id="GO:0005829">
    <property type="term" value="C:cytosol"/>
    <property type="evidence" value="ECO:0007669"/>
    <property type="project" value="TreeGrafter"/>
</dbReference>
<dbReference type="GO" id="GO:0005524">
    <property type="term" value="F:ATP binding"/>
    <property type="evidence" value="ECO:0007669"/>
    <property type="project" value="UniProtKB-UniRule"/>
</dbReference>
<dbReference type="GO" id="GO:0004810">
    <property type="term" value="F:CCA tRNA nucleotidyltransferase activity"/>
    <property type="evidence" value="ECO:0007669"/>
    <property type="project" value="InterPro"/>
</dbReference>
<dbReference type="GO" id="GO:0000049">
    <property type="term" value="F:tRNA binding"/>
    <property type="evidence" value="ECO:0007669"/>
    <property type="project" value="UniProtKB-UniRule"/>
</dbReference>
<dbReference type="GO" id="GO:0140741">
    <property type="term" value="F:tRNA-uracil-4 sulfurtransferase activity"/>
    <property type="evidence" value="ECO:0007669"/>
    <property type="project" value="UniProtKB-EC"/>
</dbReference>
<dbReference type="GO" id="GO:0009228">
    <property type="term" value="P:thiamine biosynthetic process"/>
    <property type="evidence" value="ECO:0007669"/>
    <property type="project" value="UniProtKB-KW"/>
</dbReference>
<dbReference type="GO" id="GO:0009229">
    <property type="term" value="P:thiamine diphosphate biosynthetic process"/>
    <property type="evidence" value="ECO:0007669"/>
    <property type="project" value="UniProtKB-UniRule"/>
</dbReference>
<dbReference type="GO" id="GO:0052837">
    <property type="term" value="P:thiazole biosynthetic process"/>
    <property type="evidence" value="ECO:0007669"/>
    <property type="project" value="TreeGrafter"/>
</dbReference>
<dbReference type="GO" id="GO:0002937">
    <property type="term" value="P:tRNA 4-thiouridine biosynthesis"/>
    <property type="evidence" value="ECO:0007669"/>
    <property type="project" value="TreeGrafter"/>
</dbReference>
<dbReference type="CDD" id="cd01712">
    <property type="entry name" value="PPase_ThiI"/>
    <property type="match status" value="1"/>
</dbReference>
<dbReference type="CDD" id="cd11716">
    <property type="entry name" value="THUMP_ThiI"/>
    <property type="match status" value="1"/>
</dbReference>
<dbReference type="FunFam" id="3.40.50.620:FF:000053">
    <property type="entry name" value="Probable tRNA sulfurtransferase"/>
    <property type="match status" value="1"/>
</dbReference>
<dbReference type="Gene3D" id="3.30.2130.30">
    <property type="match status" value="1"/>
</dbReference>
<dbReference type="Gene3D" id="3.40.50.620">
    <property type="entry name" value="HUPs"/>
    <property type="match status" value="1"/>
</dbReference>
<dbReference type="HAMAP" id="MF_00021">
    <property type="entry name" value="ThiI"/>
    <property type="match status" value="1"/>
</dbReference>
<dbReference type="InterPro" id="IPR014729">
    <property type="entry name" value="Rossmann-like_a/b/a_fold"/>
</dbReference>
<dbReference type="InterPro" id="IPR020536">
    <property type="entry name" value="ThiI_AANH"/>
</dbReference>
<dbReference type="InterPro" id="IPR054173">
    <property type="entry name" value="ThiI_fer"/>
</dbReference>
<dbReference type="InterPro" id="IPR049961">
    <property type="entry name" value="ThiI_N"/>
</dbReference>
<dbReference type="InterPro" id="IPR004114">
    <property type="entry name" value="THUMP_dom"/>
</dbReference>
<dbReference type="InterPro" id="IPR049962">
    <property type="entry name" value="THUMP_ThiI"/>
</dbReference>
<dbReference type="InterPro" id="IPR003720">
    <property type="entry name" value="tRNA_STrfase"/>
</dbReference>
<dbReference type="InterPro" id="IPR050102">
    <property type="entry name" value="tRNA_sulfurtransferase_ThiI"/>
</dbReference>
<dbReference type="NCBIfam" id="TIGR00342">
    <property type="entry name" value="tRNA uracil 4-sulfurtransferase ThiI"/>
    <property type="match status" value="1"/>
</dbReference>
<dbReference type="PANTHER" id="PTHR43209">
    <property type="entry name" value="TRNA SULFURTRANSFERASE"/>
    <property type="match status" value="1"/>
</dbReference>
<dbReference type="PANTHER" id="PTHR43209:SF1">
    <property type="entry name" value="TRNA SULFURTRANSFERASE"/>
    <property type="match status" value="1"/>
</dbReference>
<dbReference type="Pfam" id="PF02568">
    <property type="entry name" value="ThiI"/>
    <property type="match status" value="1"/>
</dbReference>
<dbReference type="Pfam" id="PF22025">
    <property type="entry name" value="ThiI_fer"/>
    <property type="match status" value="1"/>
</dbReference>
<dbReference type="Pfam" id="PF02926">
    <property type="entry name" value="THUMP"/>
    <property type="match status" value="1"/>
</dbReference>
<dbReference type="SMART" id="SM00981">
    <property type="entry name" value="THUMP"/>
    <property type="match status" value="1"/>
</dbReference>
<dbReference type="SUPFAM" id="SSF52402">
    <property type="entry name" value="Adenine nucleotide alpha hydrolases-like"/>
    <property type="match status" value="1"/>
</dbReference>
<dbReference type="SUPFAM" id="SSF143437">
    <property type="entry name" value="THUMP domain-like"/>
    <property type="match status" value="1"/>
</dbReference>
<dbReference type="PROSITE" id="PS51165">
    <property type="entry name" value="THUMP"/>
    <property type="match status" value="1"/>
</dbReference>
<name>THII_STRP1</name>
<gene>
    <name evidence="1" type="primary">thiI</name>
    <name type="ordered locus">SPy_0817</name>
    <name type="ordered locus">M5005_Spy0631</name>
</gene>
<accession>Q9A0D8</accession>
<accession>Q48ZG9</accession>
<proteinExistence type="inferred from homology"/>
<comment type="function">
    <text evidence="1">Catalyzes the ATP-dependent transfer of a sulfur to tRNA to produce 4-thiouridine in position 8 of tRNAs, which functions as a near-UV photosensor. Also catalyzes the transfer of sulfur to the sulfur carrier protein ThiS, forming ThiS-thiocarboxylate. This is a step in the synthesis of thiazole, in the thiamine biosynthesis pathway. The sulfur is donated as persulfide by IscS.</text>
</comment>
<comment type="catalytic activity">
    <reaction evidence="1">
        <text>[ThiI sulfur-carrier protein]-S-sulfanyl-L-cysteine + a uridine in tRNA + 2 reduced [2Fe-2S]-[ferredoxin] + ATP + H(+) = [ThiI sulfur-carrier protein]-L-cysteine + a 4-thiouridine in tRNA + 2 oxidized [2Fe-2S]-[ferredoxin] + AMP + diphosphate</text>
        <dbReference type="Rhea" id="RHEA:24176"/>
        <dbReference type="Rhea" id="RHEA-COMP:10000"/>
        <dbReference type="Rhea" id="RHEA-COMP:10001"/>
        <dbReference type="Rhea" id="RHEA-COMP:13337"/>
        <dbReference type="Rhea" id="RHEA-COMP:13338"/>
        <dbReference type="Rhea" id="RHEA-COMP:13339"/>
        <dbReference type="Rhea" id="RHEA-COMP:13340"/>
        <dbReference type="ChEBI" id="CHEBI:15378"/>
        <dbReference type="ChEBI" id="CHEBI:29950"/>
        <dbReference type="ChEBI" id="CHEBI:30616"/>
        <dbReference type="ChEBI" id="CHEBI:33019"/>
        <dbReference type="ChEBI" id="CHEBI:33737"/>
        <dbReference type="ChEBI" id="CHEBI:33738"/>
        <dbReference type="ChEBI" id="CHEBI:61963"/>
        <dbReference type="ChEBI" id="CHEBI:65315"/>
        <dbReference type="ChEBI" id="CHEBI:136798"/>
        <dbReference type="ChEBI" id="CHEBI:456215"/>
        <dbReference type="EC" id="2.8.1.4"/>
    </reaction>
</comment>
<comment type="catalytic activity">
    <reaction evidence="1">
        <text>[ThiS sulfur-carrier protein]-C-terminal Gly-Gly-AMP + S-sulfanyl-L-cysteinyl-[cysteine desulfurase] + AH2 = [ThiS sulfur-carrier protein]-C-terminal-Gly-aminoethanethioate + L-cysteinyl-[cysteine desulfurase] + A + AMP + 2 H(+)</text>
        <dbReference type="Rhea" id="RHEA:43340"/>
        <dbReference type="Rhea" id="RHEA-COMP:12157"/>
        <dbReference type="Rhea" id="RHEA-COMP:12158"/>
        <dbReference type="Rhea" id="RHEA-COMP:12910"/>
        <dbReference type="Rhea" id="RHEA-COMP:19908"/>
        <dbReference type="ChEBI" id="CHEBI:13193"/>
        <dbReference type="ChEBI" id="CHEBI:15378"/>
        <dbReference type="ChEBI" id="CHEBI:17499"/>
        <dbReference type="ChEBI" id="CHEBI:29950"/>
        <dbReference type="ChEBI" id="CHEBI:61963"/>
        <dbReference type="ChEBI" id="CHEBI:90618"/>
        <dbReference type="ChEBI" id="CHEBI:232372"/>
        <dbReference type="ChEBI" id="CHEBI:456215"/>
    </reaction>
</comment>
<comment type="pathway">
    <text evidence="1">Cofactor biosynthesis; thiamine diphosphate biosynthesis.</text>
</comment>
<comment type="subcellular location">
    <subcellularLocation>
        <location evidence="1">Cytoplasm</location>
    </subcellularLocation>
</comment>
<comment type="similarity">
    <text evidence="1">Belongs to the ThiI family.</text>
</comment>